<organism>
    <name type="scientific">Macaca fascicularis</name>
    <name type="common">Crab-eating macaque</name>
    <name type="synonym">Cynomolgus monkey</name>
    <dbReference type="NCBI Taxonomy" id="9541"/>
    <lineage>
        <taxon>Eukaryota</taxon>
        <taxon>Metazoa</taxon>
        <taxon>Chordata</taxon>
        <taxon>Craniata</taxon>
        <taxon>Vertebrata</taxon>
        <taxon>Euteleostomi</taxon>
        <taxon>Mammalia</taxon>
        <taxon>Eutheria</taxon>
        <taxon>Euarchontoglires</taxon>
        <taxon>Primates</taxon>
        <taxon>Haplorrhini</taxon>
        <taxon>Catarrhini</taxon>
        <taxon>Cercopithecidae</taxon>
        <taxon>Cercopithecinae</taxon>
        <taxon>Macaca</taxon>
    </lineage>
</organism>
<comment type="similarity">
    <text evidence="3">Belongs to the GDAP2 family.</text>
</comment>
<accession>Q4R678</accession>
<reference key="1">
    <citation type="submission" date="2005-06" db="EMBL/GenBank/DDBJ databases">
        <title>DNA sequences of macaque genes expressed in brain or testis and its evolutionary implications.</title>
        <authorList>
            <consortium name="International consortium for macaque cDNA sequencing and analysis"/>
        </authorList>
    </citation>
    <scope>NUCLEOTIDE SEQUENCE [LARGE SCALE MRNA]</scope>
    <source>
        <tissue>Testis</tissue>
    </source>
</reference>
<proteinExistence type="evidence at transcript level"/>
<name>GDAP2_MACFA</name>
<keyword id="KW-0597">Phosphoprotein</keyword>
<keyword id="KW-1185">Reference proteome</keyword>
<protein>
    <recommendedName>
        <fullName>Ganglioside-induced differentiation-associated protein 2</fullName>
    </recommendedName>
</protein>
<feature type="chain" id="PRO_0000331395" description="Ganglioside-induced differentiation-associated protein 2">
    <location>
        <begin position="1"/>
        <end position="461"/>
    </location>
</feature>
<feature type="domain" description="Macro" evidence="2">
    <location>
        <begin position="1"/>
        <end position="187"/>
    </location>
</feature>
<feature type="domain" description="CRAL-TRIO">
    <location>
        <begin position="297"/>
        <end position="445"/>
    </location>
</feature>
<feature type="modified residue" description="Phosphoserine" evidence="1">
    <location>
        <position position="244"/>
    </location>
</feature>
<evidence type="ECO:0000250" key="1">
    <source>
        <dbReference type="UniProtKB" id="Q9NXN4"/>
    </source>
</evidence>
<evidence type="ECO:0000255" key="2">
    <source>
        <dbReference type="PROSITE-ProRule" id="PRU00490"/>
    </source>
</evidence>
<evidence type="ECO:0000305" key="3"/>
<dbReference type="EMBL" id="AB169311">
    <property type="protein sequence ID" value="BAE01397.1"/>
    <property type="molecule type" value="mRNA"/>
</dbReference>
<dbReference type="RefSeq" id="NP_001270791.1">
    <property type="nucleotide sequence ID" value="NM_001283862.1"/>
</dbReference>
<dbReference type="SMR" id="Q4R678"/>
<dbReference type="STRING" id="9541.ENSMFAP00000039373"/>
<dbReference type="Proteomes" id="UP000233100">
    <property type="component" value="Unplaced"/>
</dbReference>
<dbReference type="CDD" id="cd02905">
    <property type="entry name" value="Macro_GDAP2-like"/>
    <property type="match status" value="1"/>
</dbReference>
<dbReference type="CDD" id="cd00170">
    <property type="entry name" value="SEC14"/>
    <property type="match status" value="1"/>
</dbReference>
<dbReference type="FunFam" id="3.40.525.10:FF:000014">
    <property type="entry name" value="Ganglioside-induced differentiation-associated protein 2"/>
    <property type="match status" value="1"/>
</dbReference>
<dbReference type="Gene3D" id="3.40.525.10">
    <property type="entry name" value="CRAL-TRIO lipid binding domain"/>
    <property type="match status" value="1"/>
</dbReference>
<dbReference type="Gene3D" id="3.40.220.10">
    <property type="entry name" value="Leucine Aminopeptidase, subunit E, domain 1"/>
    <property type="match status" value="1"/>
</dbReference>
<dbReference type="InterPro" id="IPR001251">
    <property type="entry name" value="CRAL-TRIO_dom"/>
</dbReference>
<dbReference type="InterPro" id="IPR036865">
    <property type="entry name" value="CRAL-TRIO_dom_sf"/>
</dbReference>
<dbReference type="InterPro" id="IPR002589">
    <property type="entry name" value="Macro_dom"/>
</dbReference>
<dbReference type="InterPro" id="IPR043472">
    <property type="entry name" value="Macro_dom-like"/>
</dbReference>
<dbReference type="InterPro" id="IPR035793">
    <property type="entry name" value="Macro_GDAP2"/>
</dbReference>
<dbReference type="PANTHER" id="PTHR11106">
    <property type="entry name" value="GANGLIOSIDE INDUCED DIFFERENTIATION ASSOCIATED PROTEIN 2-RELATED"/>
    <property type="match status" value="1"/>
</dbReference>
<dbReference type="PANTHER" id="PTHR11106:SF72">
    <property type="entry name" value="GANGLIOSIDE-INDUCED DIFFERENTIATION-ASSOCIATED PROTEIN 2"/>
    <property type="match status" value="1"/>
</dbReference>
<dbReference type="Pfam" id="PF13716">
    <property type="entry name" value="CRAL_TRIO_2"/>
    <property type="match status" value="1"/>
</dbReference>
<dbReference type="Pfam" id="PF01661">
    <property type="entry name" value="Macro"/>
    <property type="match status" value="1"/>
</dbReference>
<dbReference type="SMART" id="SM00506">
    <property type="entry name" value="A1pp"/>
    <property type="match status" value="1"/>
</dbReference>
<dbReference type="SMART" id="SM00516">
    <property type="entry name" value="SEC14"/>
    <property type="match status" value="1"/>
</dbReference>
<dbReference type="SUPFAM" id="SSF52087">
    <property type="entry name" value="CRAL/TRIO domain"/>
    <property type="match status" value="1"/>
</dbReference>
<dbReference type="SUPFAM" id="SSF52949">
    <property type="entry name" value="Macro domain-like"/>
    <property type="match status" value="1"/>
</dbReference>
<dbReference type="PROSITE" id="PS51154">
    <property type="entry name" value="MACRO"/>
    <property type="match status" value="1"/>
</dbReference>
<sequence>MDPLGAPSQFVDVDALPSWGDSCRDELNSSDTTAIVNTSNESLTDKNPVSESIFMLAGPDLKEDLQKLKGCRTGEAKLTKGFNLAARFIIHTVGPKYKSRYRTAAESSLYSCYRNVLQLAKEQSMSSVGFCVINSAKRGYPLEDATHIALRTVRRFLEIHGETIEKVVFAVSDLEEATYQKLLPLYFPRSLKEENRSLPYLPADIGNAEGEPVVPERQIRISEKPGAPEDNQEEEDEGLGVDLSFIGSHAFARMEGDIDKQRKLILQGQLSEAALQKQHQRNYNRWLCQARSEDLSDIASLKALYQTGVDNCGRTVMVVVGRNIPVTLIDMDKALLYFIHVMDHIAVKEYVLVYFHTLTSEYNHLDSDFLKKLYDVVDVKYKRNLKAVYFVHPTFRSKVSTWFFTTFSVSGLKDKIHHVDSLHQLFSAISPEQIDFPPFVLEYDARENGPYYTSYPPSPDL</sequence>
<gene>
    <name type="primary">GDAP2</name>
    <name type="ORF">QtsA-18857</name>
</gene>